<protein>
    <recommendedName>
        <fullName evidence="2">Peptide chain release factor 2</fullName>
        <shortName evidence="2">RF-2</shortName>
    </recommendedName>
</protein>
<comment type="function">
    <text evidence="2">Peptide chain release factor 2 directs the termination of translation in response to the peptide chain termination codons UGA and UAA.</text>
</comment>
<comment type="subcellular location">
    <subcellularLocation>
        <location evidence="2">Cytoplasm</location>
    </subcellularLocation>
</comment>
<comment type="PTM">
    <text evidence="2">Methylated by PrmC. Methylation increases the termination efficiency of RF2.</text>
</comment>
<comment type="miscellaneous">
    <text evidence="1">The gene for this protein contains a UGA in-frame termination codon after Leu-27; a naturally occurring frameshift enables complete translation of RF-2. This provides a mechanism for the protein to regulate its own production (By similarity).</text>
</comment>
<comment type="similarity">
    <text evidence="2">Belongs to the prokaryotic/mitochondrial release factor family.</text>
</comment>
<sequence>MEAERQNQIAARLADYAEREQALRRYLDYDAKTERLHVVNAELEDPAVWNDPKHAQDLGREKKSLEDVVQTLTELGQGVADALELFELAAADEDDATLESIENDANTFQERLEGLEFRRMFSNPADPLNCFLDIQAGAGGTEAQDWASMLLRQYLKYAERKGFKAEVLEESEGEIAGIKSATIKLEGEYAFGYLRTETGVHRLVRKSPFDSSGGRHTSFASVFVYPEVDESFEVEVNPADLRVDTYRASGAGGQHINKTDSAVRITHMPSGIVVQCQNDRSQHRNRAEAMQMLKSKLYELEMRKRMAEQQKLEDSKTDVGWGHQIRSYVLDQSRIKDLRTNVEISNTQKVLDGDLDPFIQASLKQGV</sequence>
<proteinExistence type="inferred from homology"/>
<feature type="chain" id="PRO_1000004972" description="Peptide chain release factor 2">
    <location>
        <begin position="1"/>
        <end position="367"/>
    </location>
</feature>
<feature type="modified residue" description="N5-methylglutamine" evidence="2">
    <location>
        <position position="254"/>
    </location>
</feature>
<organism>
    <name type="scientific">Bordetella avium (strain 197N)</name>
    <dbReference type="NCBI Taxonomy" id="360910"/>
    <lineage>
        <taxon>Bacteria</taxon>
        <taxon>Pseudomonadati</taxon>
        <taxon>Pseudomonadota</taxon>
        <taxon>Betaproteobacteria</taxon>
        <taxon>Burkholderiales</taxon>
        <taxon>Alcaligenaceae</taxon>
        <taxon>Bordetella</taxon>
    </lineage>
</organism>
<keyword id="KW-0963">Cytoplasm</keyword>
<keyword id="KW-0488">Methylation</keyword>
<keyword id="KW-0648">Protein biosynthesis</keyword>
<keyword id="KW-1185">Reference proteome</keyword>
<keyword id="KW-0688">Ribosomal frameshifting</keyword>
<gene>
    <name evidence="2" type="primary">prfB</name>
    <name type="ordered locus">BAV1519</name>
</gene>
<accession>Q2L224</accession>
<evidence type="ECO:0000250" key="1"/>
<evidence type="ECO:0000255" key="2">
    <source>
        <dbReference type="HAMAP-Rule" id="MF_00094"/>
    </source>
</evidence>
<reference key="1">
    <citation type="journal article" date="2006" name="J. Bacteriol.">
        <title>Comparison of the genome sequence of the poultry pathogen Bordetella avium with those of B. bronchiseptica, B. pertussis, and B. parapertussis reveals extensive diversity in surface structures associated with host interaction.</title>
        <authorList>
            <person name="Sebaihia M."/>
            <person name="Preston A."/>
            <person name="Maskell D.J."/>
            <person name="Kuzmiak H."/>
            <person name="Connell T.D."/>
            <person name="King N.D."/>
            <person name="Orndorff P.E."/>
            <person name="Miyamoto D.M."/>
            <person name="Thomson N.R."/>
            <person name="Harris D."/>
            <person name="Goble A."/>
            <person name="Lord A."/>
            <person name="Murphy L."/>
            <person name="Quail M.A."/>
            <person name="Rutter S."/>
            <person name="Squares R."/>
            <person name="Squares S."/>
            <person name="Woodward J."/>
            <person name="Parkhill J."/>
            <person name="Temple L.M."/>
        </authorList>
    </citation>
    <scope>NUCLEOTIDE SEQUENCE [LARGE SCALE GENOMIC DNA]</scope>
    <source>
        <strain>197N</strain>
    </source>
</reference>
<dbReference type="EMBL" id="AM167904">
    <property type="protein sequence ID" value="CAJ49132.1"/>
    <property type="molecule type" value="Genomic_DNA"/>
</dbReference>
<dbReference type="RefSeq" id="WP_012417196.1">
    <property type="nucleotide sequence ID" value="NC_010645.1"/>
</dbReference>
<dbReference type="SMR" id="Q2L224"/>
<dbReference type="STRING" id="360910.BAV1519"/>
<dbReference type="GeneID" id="92935416"/>
<dbReference type="KEGG" id="bav:BAV1519"/>
<dbReference type="eggNOG" id="COG1186">
    <property type="taxonomic scope" value="Bacteria"/>
</dbReference>
<dbReference type="HOGENOM" id="CLU_220733_0_1_4"/>
<dbReference type="OrthoDB" id="9806673at2"/>
<dbReference type="Proteomes" id="UP000001977">
    <property type="component" value="Chromosome"/>
</dbReference>
<dbReference type="GO" id="GO:0005737">
    <property type="term" value="C:cytoplasm"/>
    <property type="evidence" value="ECO:0007669"/>
    <property type="project" value="UniProtKB-SubCell"/>
</dbReference>
<dbReference type="GO" id="GO:0016149">
    <property type="term" value="F:translation release factor activity, codon specific"/>
    <property type="evidence" value="ECO:0007669"/>
    <property type="project" value="UniProtKB-UniRule"/>
</dbReference>
<dbReference type="GO" id="GO:0075523">
    <property type="term" value="P:viral translational frameshifting"/>
    <property type="evidence" value="ECO:0007669"/>
    <property type="project" value="UniProtKB-KW"/>
</dbReference>
<dbReference type="FunFam" id="3.30.160.20:FF:000010">
    <property type="entry name" value="Peptide chain release factor 2"/>
    <property type="match status" value="1"/>
</dbReference>
<dbReference type="Gene3D" id="3.30.160.20">
    <property type="match status" value="1"/>
</dbReference>
<dbReference type="Gene3D" id="3.30.70.1660">
    <property type="match status" value="1"/>
</dbReference>
<dbReference type="Gene3D" id="1.20.58.410">
    <property type="entry name" value="Release factor"/>
    <property type="match status" value="1"/>
</dbReference>
<dbReference type="HAMAP" id="MF_00094">
    <property type="entry name" value="Rel_fac_2"/>
    <property type="match status" value="1"/>
</dbReference>
<dbReference type="InterPro" id="IPR005139">
    <property type="entry name" value="PCRF"/>
</dbReference>
<dbReference type="InterPro" id="IPR000352">
    <property type="entry name" value="Pep_chain_release_fac_I"/>
</dbReference>
<dbReference type="InterPro" id="IPR045853">
    <property type="entry name" value="Pep_chain_release_fac_I_sf"/>
</dbReference>
<dbReference type="InterPro" id="IPR004374">
    <property type="entry name" value="PrfB"/>
</dbReference>
<dbReference type="NCBIfam" id="TIGR00020">
    <property type="entry name" value="prfB"/>
    <property type="match status" value="1"/>
</dbReference>
<dbReference type="PANTHER" id="PTHR43116:SF3">
    <property type="entry name" value="CLASS I PEPTIDE CHAIN RELEASE FACTOR"/>
    <property type="match status" value="1"/>
</dbReference>
<dbReference type="PANTHER" id="PTHR43116">
    <property type="entry name" value="PEPTIDE CHAIN RELEASE FACTOR 2"/>
    <property type="match status" value="1"/>
</dbReference>
<dbReference type="Pfam" id="PF03462">
    <property type="entry name" value="PCRF"/>
    <property type="match status" value="1"/>
</dbReference>
<dbReference type="Pfam" id="PF00472">
    <property type="entry name" value="RF-1"/>
    <property type="match status" value="1"/>
</dbReference>
<dbReference type="SMART" id="SM00937">
    <property type="entry name" value="PCRF"/>
    <property type="match status" value="1"/>
</dbReference>
<dbReference type="SUPFAM" id="SSF75620">
    <property type="entry name" value="Release factor"/>
    <property type="match status" value="1"/>
</dbReference>
<dbReference type="PROSITE" id="PS00745">
    <property type="entry name" value="RF_PROK_I"/>
    <property type="match status" value="1"/>
</dbReference>
<name>RF2_BORA1</name>